<dbReference type="EMBL" id="X68283">
    <property type="protein sequence ID" value="CAA48344.1"/>
    <property type="molecule type" value="mRNA"/>
</dbReference>
<dbReference type="EMBL" id="X60744">
    <property type="protein sequence ID" value="CAA43146.1"/>
    <property type="molecule type" value="mRNA"/>
</dbReference>
<dbReference type="EMBL" id="BC086404">
    <property type="protein sequence ID" value="AAH86404.1"/>
    <property type="molecule type" value="mRNA"/>
</dbReference>
<dbReference type="PIR" id="S20594">
    <property type="entry name" value="R6RT43"/>
</dbReference>
<dbReference type="RefSeq" id="NP_058846.1">
    <property type="nucleotide sequence ID" value="NM_017150.1"/>
</dbReference>
<dbReference type="RefSeq" id="XP_063121080.1">
    <property type="nucleotide sequence ID" value="XM_063265010.1"/>
</dbReference>
<dbReference type="RefSeq" id="XP_063121081.1">
    <property type="nucleotide sequence ID" value="XM_063265011.1"/>
</dbReference>
<dbReference type="RefSeq" id="XP_063121082.1">
    <property type="nucleotide sequence ID" value="XM_063265012.1"/>
</dbReference>
<dbReference type="RefSeq" id="XP_063121084.1">
    <property type="nucleotide sequence ID" value="XM_063265014.1"/>
</dbReference>
<dbReference type="PDB" id="7QGG">
    <property type="method" value="EM"/>
    <property type="resolution" value="2.86 A"/>
    <property type="chains" value="c=1-156"/>
</dbReference>
<dbReference type="PDBsum" id="7QGG"/>
<dbReference type="EMDB" id="EMD-13954"/>
<dbReference type="SMR" id="P25886"/>
<dbReference type="FunCoup" id="P25886">
    <property type="interactions" value="1894"/>
</dbReference>
<dbReference type="STRING" id="10116.ENSRNOP00000014849"/>
<dbReference type="GlyGen" id="P25886">
    <property type="glycosylation" value="1 site, 1 O-linked glycan (1 site)"/>
</dbReference>
<dbReference type="iPTMnet" id="P25886"/>
<dbReference type="PhosphoSitePlus" id="P25886"/>
<dbReference type="PaxDb" id="10116-ENSRNOP00000014849"/>
<dbReference type="GeneID" id="29283"/>
<dbReference type="KEGG" id="rno:29283"/>
<dbReference type="UCSC" id="RGD:62069">
    <property type="organism name" value="rat"/>
</dbReference>
<dbReference type="AGR" id="RGD:62069"/>
<dbReference type="CTD" id="6159"/>
<dbReference type="RGD" id="62069">
    <property type="gene designation" value="Rpl29"/>
</dbReference>
<dbReference type="VEuPathDB" id="HostDB:ENSRNOG00000011138"/>
<dbReference type="eggNOG" id="KOG3504">
    <property type="taxonomic scope" value="Eukaryota"/>
</dbReference>
<dbReference type="HOGENOM" id="CLU_139508_0_0_1"/>
<dbReference type="InParanoid" id="P25886"/>
<dbReference type="OrthoDB" id="80899at9989"/>
<dbReference type="PhylomeDB" id="P25886"/>
<dbReference type="TreeFam" id="TF313858"/>
<dbReference type="Reactome" id="R-RNO-156827">
    <property type="pathway name" value="L13a-mediated translational silencing of Ceruloplasmin expression"/>
</dbReference>
<dbReference type="Reactome" id="R-RNO-1799339">
    <property type="pathway name" value="SRP-dependent cotranslational protein targeting to membrane"/>
</dbReference>
<dbReference type="Reactome" id="R-RNO-6791226">
    <property type="pathway name" value="Major pathway of rRNA processing in the nucleolus and cytosol"/>
</dbReference>
<dbReference type="Reactome" id="R-RNO-72689">
    <property type="pathway name" value="Formation of a pool of free 40S subunits"/>
</dbReference>
<dbReference type="Reactome" id="R-RNO-72706">
    <property type="pathway name" value="GTP hydrolysis and joining of the 60S ribosomal subunit"/>
</dbReference>
<dbReference type="Reactome" id="R-RNO-975956">
    <property type="pathway name" value="Nonsense Mediated Decay (NMD) independent of the Exon Junction Complex (EJC)"/>
</dbReference>
<dbReference type="Reactome" id="R-RNO-975957">
    <property type="pathway name" value="Nonsense Mediated Decay (NMD) enhanced by the Exon Junction Complex (EJC)"/>
</dbReference>
<dbReference type="PRO" id="PR:P25886"/>
<dbReference type="Proteomes" id="UP000002494">
    <property type="component" value="Chromosome 8"/>
</dbReference>
<dbReference type="Bgee" id="ENSRNOG00000011138">
    <property type="expression patterns" value="Expressed in ovary and 19 other cell types or tissues"/>
</dbReference>
<dbReference type="GO" id="GO:0005737">
    <property type="term" value="C:cytoplasm"/>
    <property type="evidence" value="ECO:0000266"/>
    <property type="project" value="RGD"/>
</dbReference>
<dbReference type="GO" id="GO:0098556">
    <property type="term" value="C:cytoplasmic side of rough endoplasmic reticulum membrane"/>
    <property type="evidence" value="ECO:0000266"/>
    <property type="project" value="RGD"/>
</dbReference>
<dbReference type="GO" id="GO:0022625">
    <property type="term" value="C:cytosolic large ribosomal subunit"/>
    <property type="evidence" value="ECO:0000314"/>
    <property type="project" value="RGD"/>
</dbReference>
<dbReference type="GO" id="GO:0022626">
    <property type="term" value="C:cytosolic ribosome"/>
    <property type="evidence" value="ECO:0000266"/>
    <property type="project" value="RGD"/>
</dbReference>
<dbReference type="GO" id="GO:0015934">
    <property type="term" value="C:large ribosomal subunit"/>
    <property type="evidence" value="ECO:0000266"/>
    <property type="project" value="RGD"/>
</dbReference>
<dbReference type="GO" id="GO:0016020">
    <property type="term" value="C:membrane"/>
    <property type="evidence" value="ECO:0000266"/>
    <property type="project" value="RGD"/>
</dbReference>
<dbReference type="GO" id="GO:0005840">
    <property type="term" value="C:ribosome"/>
    <property type="evidence" value="ECO:0000314"/>
    <property type="project" value="RGD"/>
</dbReference>
<dbReference type="GO" id="GO:0045202">
    <property type="term" value="C:synapse"/>
    <property type="evidence" value="ECO:0000266"/>
    <property type="project" value="RGD"/>
</dbReference>
<dbReference type="GO" id="GO:0008201">
    <property type="term" value="F:heparin binding"/>
    <property type="evidence" value="ECO:0000266"/>
    <property type="project" value="RGD"/>
</dbReference>
<dbReference type="GO" id="GO:0003735">
    <property type="term" value="F:structural constituent of ribosome"/>
    <property type="evidence" value="ECO:0000266"/>
    <property type="project" value="RGD"/>
</dbReference>
<dbReference type="GO" id="GO:0031589">
    <property type="term" value="P:cell-substrate adhesion"/>
    <property type="evidence" value="ECO:0000266"/>
    <property type="project" value="RGD"/>
</dbReference>
<dbReference type="GO" id="GO:0002181">
    <property type="term" value="P:cytoplasmic translation"/>
    <property type="evidence" value="ECO:0000318"/>
    <property type="project" value="GO_Central"/>
</dbReference>
<dbReference type="GO" id="GO:0048144">
    <property type="term" value="P:fibroblast proliferation"/>
    <property type="evidence" value="ECO:0000266"/>
    <property type="project" value="RGD"/>
</dbReference>
<dbReference type="GO" id="GO:0035264">
    <property type="term" value="P:multicellular organism growth"/>
    <property type="evidence" value="ECO:0000266"/>
    <property type="project" value="RGD"/>
</dbReference>
<dbReference type="GO" id="GO:0006412">
    <property type="term" value="P:translation"/>
    <property type="evidence" value="ECO:0000266"/>
    <property type="project" value="RGD"/>
</dbReference>
<dbReference type="Gene3D" id="6.10.140.1730">
    <property type="match status" value="1"/>
</dbReference>
<dbReference type="InterPro" id="IPR002673">
    <property type="entry name" value="Ribosomal_eL29"/>
</dbReference>
<dbReference type="PANTHER" id="PTHR12884">
    <property type="entry name" value="60S RIBOSOMAL PROTEIN L29"/>
    <property type="match status" value="1"/>
</dbReference>
<dbReference type="PANTHER" id="PTHR12884:SF18">
    <property type="entry name" value="60S RIBOSOMAL PROTEIN L29"/>
    <property type="match status" value="1"/>
</dbReference>
<dbReference type="Pfam" id="PF01779">
    <property type="entry name" value="Ribosomal_L29e"/>
    <property type="match status" value="1"/>
</dbReference>
<sequence length="156" mass="17326">MAKSKNHTTHNQSRKWHRNGIKKPRSQRYESLKGVDPKFLRNMRFAKKHNKKGLKKMQANNAKAVSARAEAIKALVKPQAVKPKMPKGSSRKLSRLAFIAHPKLGKKIRSYMAKGRRLCQPKPKVQTKAEAKAPAKAQAKAPAQAPKGAQAPVKAP</sequence>
<protein>
    <recommendedName>
        <fullName evidence="6">Large ribosomal subunit protein eL29</fullName>
    </recommendedName>
    <alternativeName>
        <fullName>60S ribosomal protein L29</fullName>
    </alternativeName>
    <alternativeName>
        <fullName>P23</fullName>
    </alternativeName>
</protein>
<comment type="function">
    <text evidence="1">Component of the large ribosomal subunit. The ribosome is a large ribonucleoprotein complex responsible for the synthesis of proteins in the cell.</text>
</comment>
<comment type="subunit">
    <text evidence="1">Component of the large ribosomal subunit.</text>
</comment>
<comment type="subcellular location">
    <subcellularLocation>
        <location evidence="1">Cytoplasm</location>
    </subcellularLocation>
</comment>
<comment type="similarity">
    <text evidence="6">Belongs to the eukaryotic ribosomal protein eL29 family.</text>
</comment>
<keyword id="KW-0002">3D-structure</keyword>
<keyword id="KW-0007">Acetylation</keyword>
<keyword id="KW-0963">Cytoplasm</keyword>
<keyword id="KW-0903">Direct protein sequencing</keyword>
<keyword id="KW-0488">Methylation</keyword>
<keyword id="KW-0597">Phosphoprotein</keyword>
<keyword id="KW-1185">Reference proteome</keyword>
<keyword id="KW-0677">Repeat</keyword>
<keyword id="KW-0687">Ribonucleoprotein</keyword>
<keyword id="KW-0689">Ribosomal protein</keyword>
<gene>
    <name type="primary">Rpl29</name>
</gene>
<accession>P25886</accession>
<reference key="1">
    <citation type="journal article" date="1992" name="Eur. J. Biochem.">
        <title>Purification, primary structure and molecular cloning of a rat ribosomal protein showing homology with yeast ribosomal protein YL34.</title>
        <authorList>
            <person name="Svoboda M."/>
            <person name="Ciccarelli E."/>
            <person name="Vandermeers-Piret M.C."/>
            <person name="Nagy A.M."/>
            <person name="van de Weerdt C."/>
            <person name="Bollen A."/>
            <person name="Vandermeers A."/>
            <person name="Christophe J."/>
        </authorList>
    </citation>
    <scope>NUCLEOTIDE SEQUENCE [MRNA]</scope>
    <source>
        <strain>Wistar</strain>
        <tissue>Pancreas</tissue>
    </source>
</reference>
<reference key="2">
    <citation type="journal article" date="1993" name="Biochem. Biophys. Res. Commun.">
        <title>The primary structure of rat ribosomal protein L29.</title>
        <authorList>
            <person name="Chan Y.-L."/>
            <person name="Olvera J."/>
            <person name="Paz V."/>
            <person name="Wool I.G."/>
        </authorList>
    </citation>
    <scope>NUCLEOTIDE SEQUENCE [MRNA]</scope>
    <scope>PROTEIN SEQUENCE OF 2-35</scope>
    <source>
        <strain>Sprague-Dawley</strain>
        <tissue>Liver</tissue>
    </source>
</reference>
<reference key="3">
    <citation type="journal article" date="2004" name="Genome Res.">
        <title>The status, quality, and expansion of the NIH full-length cDNA project: the Mammalian Gene Collection (MGC).</title>
        <authorList>
            <consortium name="The MGC Project Team"/>
        </authorList>
    </citation>
    <scope>NUCLEOTIDE SEQUENCE [LARGE SCALE MRNA]</scope>
    <source>
        <tissue>Ovary</tissue>
    </source>
</reference>
<reference key="4">
    <citation type="journal article" date="1992" name="FEBS Lett.">
        <title>p23, a novel mammalian nucleic acid-binding protein with homology to the yeast ribosomal protein YL43.</title>
        <authorList>
            <person name="Oestvold A.C."/>
            <person name="Hullstein I."/>
            <person name="Sletten K."/>
        </authorList>
    </citation>
    <scope>PROTEIN SEQUENCE OF 2-29</scope>
    <source>
        <tissue>Liver</tissue>
    </source>
</reference>
<reference key="5">
    <citation type="journal article" date="1997" name="Eur. J. Biochem.">
        <title>Post-translational processing of rat ribosomal proteins. Ubiquitous methylation of Lys22 within the zinc-finger motif of RL40 (carboxy-terminal extension protein 52) and tissue-specific methylation of Lys4 in RL29.</title>
        <authorList>
            <person name="Williamson N.A."/>
            <person name="Raliegh J."/>
            <person name="Morrice N.A."/>
            <person name="Wettenhall R.E."/>
        </authorList>
    </citation>
    <scope>METHYLATION AT LYS-5</scope>
</reference>
<proteinExistence type="evidence at protein level"/>
<feature type="initiator methionine" description="Removed" evidence="3 4">
    <location>
        <position position="1"/>
    </location>
</feature>
<feature type="chain" id="PRO_0000219138" description="Large ribosomal subunit protein eL29">
    <location>
        <begin position="2"/>
        <end position="156"/>
    </location>
</feature>
<feature type="repeat" description="1">
    <location>
        <begin position="129"/>
        <end position="136"/>
    </location>
</feature>
<feature type="repeat" description="2">
    <location>
        <begin position="137"/>
        <end position="144"/>
    </location>
</feature>
<feature type="region of interest" description="Disordered" evidence="2">
    <location>
        <begin position="1"/>
        <end position="35"/>
    </location>
</feature>
<feature type="region of interest" description="Disordered" evidence="2">
    <location>
        <begin position="116"/>
        <end position="156"/>
    </location>
</feature>
<feature type="region of interest" description="2 X 8 AA tandem repeats of A-X-A-K-A-P-A-[KQ]">
    <location>
        <begin position="129"/>
        <end position="144"/>
    </location>
</feature>
<feature type="compositionally biased region" description="Basic residues" evidence="2">
    <location>
        <begin position="1"/>
        <end position="26"/>
    </location>
</feature>
<feature type="compositionally biased region" description="Low complexity" evidence="2">
    <location>
        <begin position="134"/>
        <end position="156"/>
    </location>
</feature>
<feature type="modified residue" description="N6-methyllysine" evidence="5">
    <location>
        <position position="5"/>
    </location>
</feature>
<feature type="modified residue" description="Phosphoserine" evidence="1">
    <location>
        <position position="31"/>
    </location>
</feature>
<feature type="modified residue" description="N6-acetyllysine" evidence="1">
    <location>
        <position position="33"/>
    </location>
</feature>
<organism>
    <name type="scientific">Rattus norvegicus</name>
    <name type="common">Rat</name>
    <dbReference type="NCBI Taxonomy" id="10116"/>
    <lineage>
        <taxon>Eukaryota</taxon>
        <taxon>Metazoa</taxon>
        <taxon>Chordata</taxon>
        <taxon>Craniata</taxon>
        <taxon>Vertebrata</taxon>
        <taxon>Euteleostomi</taxon>
        <taxon>Mammalia</taxon>
        <taxon>Eutheria</taxon>
        <taxon>Euarchontoglires</taxon>
        <taxon>Glires</taxon>
        <taxon>Rodentia</taxon>
        <taxon>Myomorpha</taxon>
        <taxon>Muroidea</taxon>
        <taxon>Muridae</taxon>
        <taxon>Murinae</taxon>
        <taxon>Rattus</taxon>
    </lineage>
</organism>
<name>RL29_RAT</name>
<evidence type="ECO:0000250" key="1">
    <source>
        <dbReference type="UniProtKB" id="P47914"/>
    </source>
</evidence>
<evidence type="ECO:0000256" key="2">
    <source>
        <dbReference type="SAM" id="MobiDB-lite"/>
    </source>
</evidence>
<evidence type="ECO:0000269" key="3">
    <source>
    </source>
</evidence>
<evidence type="ECO:0000269" key="4">
    <source>
    </source>
</evidence>
<evidence type="ECO:0000269" key="5">
    <source>
    </source>
</evidence>
<evidence type="ECO:0000305" key="6"/>